<evidence type="ECO:0000255" key="1">
    <source>
        <dbReference type="HAMAP-Rule" id="MF_00182"/>
    </source>
</evidence>
<feature type="chain" id="PRO_1000020046" description="Methionyl-tRNA formyltransferase">
    <location>
        <begin position="1"/>
        <end position="305"/>
    </location>
</feature>
<feature type="binding site" evidence="1">
    <location>
        <begin position="108"/>
        <end position="111"/>
    </location>
    <ligand>
        <name>(6S)-5,6,7,8-tetrahydrofolate</name>
        <dbReference type="ChEBI" id="CHEBI:57453"/>
    </ligand>
</feature>
<protein>
    <recommendedName>
        <fullName evidence="1">Methionyl-tRNA formyltransferase</fullName>
        <ecNumber evidence="1">2.1.2.9</ecNumber>
    </recommendedName>
</protein>
<dbReference type="EC" id="2.1.2.9" evidence="1"/>
<dbReference type="EMBL" id="AM711867">
    <property type="protein sequence ID" value="CAN01831.1"/>
    <property type="molecule type" value="Genomic_DNA"/>
</dbReference>
<dbReference type="RefSeq" id="WP_012038463.1">
    <property type="nucleotide sequence ID" value="NC_009480.1"/>
</dbReference>
<dbReference type="SMR" id="A5CRW8"/>
<dbReference type="KEGG" id="cmi:CMM_1775"/>
<dbReference type="eggNOG" id="COG0223">
    <property type="taxonomic scope" value="Bacteria"/>
</dbReference>
<dbReference type="HOGENOM" id="CLU_033347_1_0_11"/>
<dbReference type="OrthoDB" id="9802815at2"/>
<dbReference type="Proteomes" id="UP000001564">
    <property type="component" value="Chromosome"/>
</dbReference>
<dbReference type="GO" id="GO:0005829">
    <property type="term" value="C:cytosol"/>
    <property type="evidence" value="ECO:0007669"/>
    <property type="project" value="TreeGrafter"/>
</dbReference>
<dbReference type="GO" id="GO:0004479">
    <property type="term" value="F:methionyl-tRNA formyltransferase activity"/>
    <property type="evidence" value="ECO:0007669"/>
    <property type="project" value="UniProtKB-UniRule"/>
</dbReference>
<dbReference type="CDD" id="cd08646">
    <property type="entry name" value="FMT_core_Met-tRNA-FMT_N"/>
    <property type="match status" value="1"/>
</dbReference>
<dbReference type="CDD" id="cd08704">
    <property type="entry name" value="Met_tRNA_FMT_C"/>
    <property type="match status" value="1"/>
</dbReference>
<dbReference type="Gene3D" id="3.40.50.12230">
    <property type="match status" value="1"/>
</dbReference>
<dbReference type="HAMAP" id="MF_00182">
    <property type="entry name" value="Formyl_trans"/>
    <property type="match status" value="1"/>
</dbReference>
<dbReference type="InterPro" id="IPR005794">
    <property type="entry name" value="Fmt"/>
</dbReference>
<dbReference type="InterPro" id="IPR005793">
    <property type="entry name" value="Formyl_trans_C"/>
</dbReference>
<dbReference type="InterPro" id="IPR002376">
    <property type="entry name" value="Formyl_transf_N"/>
</dbReference>
<dbReference type="InterPro" id="IPR036477">
    <property type="entry name" value="Formyl_transf_N_sf"/>
</dbReference>
<dbReference type="InterPro" id="IPR011034">
    <property type="entry name" value="Formyl_transferase-like_C_sf"/>
</dbReference>
<dbReference type="InterPro" id="IPR044135">
    <property type="entry name" value="Met-tRNA-FMT_C"/>
</dbReference>
<dbReference type="InterPro" id="IPR041711">
    <property type="entry name" value="Met-tRNA-FMT_N"/>
</dbReference>
<dbReference type="NCBIfam" id="TIGR00460">
    <property type="entry name" value="fmt"/>
    <property type="match status" value="1"/>
</dbReference>
<dbReference type="PANTHER" id="PTHR11138">
    <property type="entry name" value="METHIONYL-TRNA FORMYLTRANSFERASE"/>
    <property type="match status" value="1"/>
</dbReference>
<dbReference type="PANTHER" id="PTHR11138:SF5">
    <property type="entry name" value="METHIONYL-TRNA FORMYLTRANSFERASE, MITOCHONDRIAL"/>
    <property type="match status" value="1"/>
</dbReference>
<dbReference type="Pfam" id="PF02911">
    <property type="entry name" value="Formyl_trans_C"/>
    <property type="match status" value="1"/>
</dbReference>
<dbReference type="Pfam" id="PF00551">
    <property type="entry name" value="Formyl_trans_N"/>
    <property type="match status" value="1"/>
</dbReference>
<dbReference type="SUPFAM" id="SSF50486">
    <property type="entry name" value="FMT C-terminal domain-like"/>
    <property type="match status" value="1"/>
</dbReference>
<dbReference type="SUPFAM" id="SSF53328">
    <property type="entry name" value="Formyltransferase"/>
    <property type="match status" value="1"/>
</dbReference>
<gene>
    <name evidence="1" type="primary">fmt</name>
    <name type="ordered locus">CMM_1775</name>
</gene>
<reference key="1">
    <citation type="journal article" date="2008" name="J. Bacteriol.">
        <title>The genome sequence of the tomato-pathogenic actinomycete Clavibacter michiganensis subsp. michiganensis NCPPB382 reveals a large island involved in pathogenicity.</title>
        <authorList>
            <person name="Gartemann K.-H."/>
            <person name="Abt B."/>
            <person name="Bekel T."/>
            <person name="Burger A."/>
            <person name="Engemann J."/>
            <person name="Fluegel M."/>
            <person name="Gaigalat L."/>
            <person name="Goesmann A."/>
            <person name="Graefen I."/>
            <person name="Kalinowski J."/>
            <person name="Kaup O."/>
            <person name="Kirchner O."/>
            <person name="Krause L."/>
            <person name="Linke B."/>
            <person name="McHardy A."/>
            <person name="Meyer F."/>
            <person name="Pohle S."/>
            <person name="Rueckert C."/>
            <person name="Schneiker S."/>
            <person name="Zellermann E.-M."/>
            <person name="Puehler A."/>
            <person name="Eichenlaub R."/>
            <person name="Kaiser O."/>
            <person name="Bartels D."/>
        </authorList>
    </citation>
    <scope>NUCLEOTIDE SEQUENCE [LARGE SCALE GENOMIC DNA]</scope>
    <source>
        <strain>NCPPB 382</strain>
    </source>
</reference>
<sequence length="305" mass="32067">MRLVFAGTPRAAVPSLVRLHASGHEVALVVTRADAPTGRKRQLTPSPVAREAEGLGIPTLRTNRLDEEATARIAAVGAGLGVIVAYGGLVREPLLSTPARGWINLHFSLLPRWRGAAPVQRSIMAGETVTGASVFRLERGMDTGPVFAVEERPTGAHETAGDVLHALAMQGADLLVRTVDGIAAGSAVARPQEGEPTLAPKTSIADGRIDWARPADAVLAQIRGVTPEPGAFTSVDDVRVKVHRAAELRDAAPLDPGRIESVGGAVMVGTTSHPVELIQVQPAGKKPMPAADWWRGVTTRDITAR</sequence>
<name>FMT_CLAM3</name>
<organism>
    <name type="scientific">Clavibacter michiganensis subsp. michiganensis (strain NCPPB 382)</name>
    <dbReference type="NCBI Taxonomy" id="443906"/>
    <lineage>
        <taxon>Bacteria</taxon>
        <taxon>Bacillati</taxon>
        <taxon>Actinomycetota</taxon>
        <taxon>Actinomycetes</taxon>
        <taxon>Micrococcales</taxon>
        <taxon>Microbacteriaceae</taxon>
        <taxon>Clavibacter</taxon>
    </lineage>
</organism>
<proteinExistence type="inferred from homology"/>
<accession>A5CRW8</accession>
<keyword id="KW-0648">Protein biosynthesis</keyword>
<keyword id="KW-0808">Transferase</keyword>
<comment type="function">
    <text evidence="1">Attaches a formyl group to the free amino group of methionyl-tRNA(fMet). The formyl group appears to play a dual role in the initiator identity of N-formylmethionyl-tRNA by promoting its recognition by IF2 and preventing the misappropriation of this tRNA by the elongation apparatus.</text>
</comment>
<comment type="catalytic activity">
    <reaction evidence="1">
        <text>L-methionyl-tRNA(fMet) + (6R)-10-formyltetrahydrofolate = N-formyl-L-methionyl-tRNA(fMet) + (6S)-5,6,7,8-tetrahydrofolate + H(+)</text>
        <dbReference type="Rhea" id="RHEA:24380"/>
        <dbReference type="Rhea" id="RHEA-COMP:9952"/>
        <dbReference type="Rhea" id="RHEA-COMP:9953"/>
        <dbReference type="ChEBI" id="CHEBI:15378"/>
        <dbReference type="ChEBI" id="CHEBI:57453"/>
        <dbReference type="ChEBI" id="CHEBI:78530"/>
        <dbReference type="ChEBI" id="CHEBI:78844"/>
        <dbReference type="ChEBI" id="CHEBI:195366"/>
        <dbReference type="EC" id="2.1.2.9"/>
    </reaction>
</comment>
<comment type="similarity">
    <text evidence="1">Belongs to the Fmt family.</text>
</comment>